<dbReference type="EC" id="1.14.14.91" evidence="7"/>
<dbReference type="EMBL" id="Z17369">
    <property type="protein sequence ID" value="CAA78982.1"/>
    <property type="molecule type" value="mRNA"/>
</dbReference>
<dbReference type="PIR" id="A47454">
    <property type="entry name" value="A47454"/>
</dbReference>
<dbReference type="SMR" id="Q04468"/>
<dbReference type="ChEMBL" id="CHEMBL2268006"/>
<dbReference type="BRENDA" id="1.14.14.91">
    <property type="organism ID" value="2600"/>
</dbReference>
<dbReference type="SABIO-RK" id="Q04468"/>
<dbReference type="UniPathway" id="UPA00825">
    <property type="reaction ID" value="UER00789"/>
</dbReference>
<dbReference type="GO" id="GO:0016020">
    <property type="term" value="C:membrane"/>
    <property type="evidence" value="ECO:0007669"/>
    <property type="project" value="UniProtKB-SubCell"/>
</dbReference>
<dbReference type="GO" id="GO:0020037">
    <property type="term" value="F:heme binding"/>
    <property type="evidence" value="ECO:0007669"/>
    <property type="project" value="InterPro"/>
</dbReference>
<dbReference type="GO" id="GO:0005506">
    <property type="term" value="F:iron ion binding"/>
    <property type="evidence" value="ECO:0007669"/>
    <property type="project" value="InterPro"/>
</dbReference>
<dbReference type="GO" id="GO:0016710">
    <property type="term" value="F:trans-cinnamate 4-monooxygenase activity"/>
    <property type="evidence" value="ECO:0007669"/>
    <property type="project" value="UniProtKB-EC"/>
</dbReference>
<dbReference type="GO" id="GO:0009058">
    <property type="term" value="P:biosynthetic process"/>
    <property type="evidence" value="ECO:0007669"/>
    <property type="project" value="UniProtKB-ARBA"/>
</dbReference>
<dbReference type="GO" id="GO:0009808">
    <property type="term" value="P:lignin metabolic process"/>
    <property type="evidence" value="ECO:0007669"/>
    <property type="project" value="TreeGrafter"/>
</dbReference>
<dbReference type="CDD" id="cd11074">
    <property type="entry name" value="CYP73"/>
    <property type="match status" value="1"/>
</dbReference>
<dbReference type="FunFam" id="1.10.630.10:FF:000013">
    <property type="entry name" value="Trans-cinnamate 4-monooxygenase"/>
    <property type="match status" value="1"/>
</dbReference>
<dbReference type="Gene3D" id="1.10.630.10">
    <property type="entry name" value="Cytochrome P450"/>
    <property type="match status" value="1"/>
</dbReference>
<dbReference type="InterPro" id="IPR001128">
    <property type="entry name" value="Cyt_P450"/>
</dbReference>
<dbReference type="InterPro" id="IPR017972">
    <property type="entry name" value="Cyt_P450_CS"/>
</dbReference>
<dbReference type="InterPro" id="IPR002401">
    <property type="entry name" value="Cyt_P450_E_grp-I"/>
</dbReference>
<dbReference type="InterPro" id="IPR036396">
    <property type="entry name" value="Cyt_P450_sf"/>
</dbReference>
<dbReference type="PANTHER" id="PTHR47948">
    <property type="entry name" value="TRANS-CINNAMATE 4-MONOOXYGENASE"/>
    <property type="match status" value="1"/>
</dbReference>
<dbReference type="PANTHER" id="PTHR47948:SF12">
    <property type="entry name" value="TRANS-CINNAMATE 4-MONOOXYGENASE-RELATED"/>
    <property type="match status" value="1"/>
</dbReference>
<dbReference type="Pfam" id="PF00067">
    <property type="entry name" value="p450"/>
    <property type="match status" value="1"/>
</dbReference>
<dbReference type="PRINTS" id="PR00463">
    <property type="entry name" value="EP450I"/>
</dbReference>
<dbReference type="PRINTS" id="PR00385">
    <property type="entry name" value="P450"/>
</dbReference>
<dbReference type="SUPFAM" id="SSF48264">
    <property type="entry name" value="Cytochrome P450"/>
    <property type="match status" value="1"/>
</dbReference>
<dbReference type="PROSITE" id="PS00086">
    <property type="entry name" value="CYTOCHROME_P450"/>
    <property type="match status" value="1"/>
</dbReference>
<reference key="1">
    <citation type="journal article" date="1993" name="Proc. Natl. Acad. Sci. U.S.A.">
        <title>Isolation and sequence of a cDNA encoding the Jerusalem artichoke cinnamate 4-hydroxylase, a major plant cytochrome P450 involved in the general phenylpropanoid pathway.</title>
        <authorList>
            <person name="Teutsch H.G."/>
            <person name="Hasenfratz M."/>
            <person name="Lesot A."/>
            <person name="Stoltz C."/>
            <person name="Garnier J.-M."/>
            <person name="Jeltsch J.-M."/>
            <person name="Durst F."/>
            <person name="Werck-Reichhart D."/>
        </authorList>
    </citation>
    <scope>NUCLEOTIDE SEQUENCE [MRNA]</scope>
    <scope>PROTEIN SEQUENCE OF 1-21</scope>
    <source>
        <strain>cv. Blanc commun</strain>
        <tissue>Tuberous root</tissue>
    </source>
</reference>
<reference key="2">
    <citation type="journal article" date="1994" name="Eur. J. Biochem.">
        <title>Characterization of recombinant plant cinnamate 4-hydroxylase produced in yeast. Kinetic and spectral properties of the major plant P450 of the phenylpropanoid pathway.</title>
        <authorList>
            <person name="Urban P."/>
            <person name="Werck-Reichhart D."/>
            <person name="Teutsch H.G."/>
            <person name="Durst F."/>
            <person name="Regnier S."/>
            <person name="Kazmaier M."/>
            <person name="Pompon D."/>
        </authorList>
    </citation>
    <scope>FUNCTION</scope>
    <scope>CATALYTIC ACTIVITY</scope>
</reference>
<reference key="3">
    <citation type="journal article" date="1997" name="Biochemistry">
        <title>Design of fluorescent substrates and potent inhibitors of CYP73As, P450s that catalyze 4-hydroxylation of cinnamic acid in higher plants.</title>
        <authorList>
            <person name="Schalk M."/>
            <person name="Batard Y."/>
            <person name="Seyer A."/>
            <person name="Nedelkina S."/>
            <person name="Durst F."/>
            <person name="Werck-Reichhart D."/>
        </authorList>
    </citation>
    <scope>FUNCTION</scope>
    <scope>CATALYTIC ACTIVITY</scope>
    <scope>BIOPHYSICOCHEMICAL PROPERTIES</scope>
</reference>
<reference key="4">
    <citation type="journal article" date="1997" name="Plant Physiol.">
        <title>Regulation of the cinnamate 4-hydroxylase (CYP73A1) in Jerusalem artichoke tubers in response to wounding and chemical treatments.</title>
        <authorList>
            <person name="Batard Y."/>
            <person name="Schalk M."/>
            <person name="Pierrel M.A."/>
            <person name="Zimmerlin A."/>
            <person name="Durst F."/>
            <person name="Werck-Reichhart D."/>
        </authorList>
    </citation>
    <scope>INDUCTION</scope>
</reference>
<reference key="5">
    <citation type="journal article" date="1998" name="Plant Physiol.">
        <title>Piperonylic acid, a selective, mechanism-based inactivator of the trans-cinnamate 4-hydroxylase: A new tool to control the flux of metabolites in the phenylpropanoid pathway.</title>
        <authorList>
            <person name="Schalk M."/>
            <person name="Cabello-Hurtado F."/>
            <person name="Pierrel M.A."/>
            <person name="Atanossova R."/>
            <person name="Saindrenan P."/>
            <person name="Werck-Reichhart D."/>
        </authorList>
    </citation>
    <scope>ACTIVITY REGULATION</scope>
</reference>
<reference key="6">
    <citation type="journal article" date="1999" name="Biochemistry">
        <title>Role of unusual amino acid residues in the proximal and distal heme regions of a plant P450, CYP73A1.</title>
        <authorList>
            <person name="Schalk M."/>
            <person name="Nedelkina S."/>
            <person name="Schoch G."/>
            <person name="Batard Y."/>
            <person name="Werck-Reichhart D."/>
        </authorList>
    </citation>
    <scope>MUTAGENESIS OF ALA-306 AND PRO-448</scope>
</reference>
<reference key="7">
    <citation type="journal article" date="2003" name="Eur. J. Biochem.">
        <title>Key substrate recognition residues in the active site of a plant cytochrome P450, CYP73A1. Homology guided site-directed mutagenesis.</title>
        <authorList>
            <person name="Schoch G.A."/>
            <person name="Attias R."/>
            <person name="Le Ret M."/>
            <person name="Werck-Reichhart D."/>
        </authorList>
    </citation>
    <scope>MUTAGENESIS OF ARG-101; ARG-103; ASN-302; ILE-303; ARG-366; ARG-368; ILE-371 AND LYS-484</scope>
</reference>
<reference key="8">
    <citation type="journal article" date="2003" name="Plant Physiol.">
        <title>Engineering of a water-soluble plant cytochrome P450, CYP73A1, and NMR-based orientation of natural and alternate substrates in the active site.</title>
        <authorList>
            <person name="Schoch G.A."/>
            <person name="Attias R."/>
            <person name="Belghazi M."/>
            <person name="Dansette P.M."/>
            <person name="Werck-Reichhart D."/>
        </authorList>
    </citation>
    <scope>FUNCTION</scope>
</reference>
<sequence>MDLLLIEKTLVALFAAIIGAILISKLRGKKFKLPPGPIPVPIFGNWLQVGDDLNHRNLTDLAKRFGEILLLRMGQRNLVVVSSPELAKEVLHTQGVEFGSRTRNVVFDIFTGKGQDMVFTVYGEHWRKMRRIMTVPFFTNKVVQQYRYGWEAEAAAVVDDVKKNPAAATEGIVIRRRLQLMMYNNMFRIMFDRRFESEDDPLFLKLKALNGERSRLAQSFEYNYGDFIPILRPFLRNYLKLCKEVKDKRIQLFKDYFVDERKKIGSTKKMDNNQLKCAIDHILEAKEKGEINEDNVLYIVENINVAAIETTLWSIEWGIAELVNHPEIQAKLRHELDTKLGPGVQITEPDVQNLPYLQAVVKETLRLRMAIPLLVPHMNLHDAKLGGFDIPAESKILVNAWWLANNPDQWKKPEEFRPERFLEEEAKVEANGNDFRYLPFGVGRRSCPGIILALPILGITIGRLVQNFELLPPPGQSKIDTDEKGGQFSLHILKHSTIVAKPRSF</sequence>
<keyword id="KW-0903">Direct protein sequencing</keyword>
<keyword id="KW-0349">Heme</keyword>
<keyword id="KW-0408">Iron</keyword>
<keyword id="KW-0472">Membrane</keyword>
<keyword id="KW-0479">Metal-binding</keyword>
<keyword id="KW-0503">Monooxygenase</keyword>
<keyword id="KW-0560">Oxidoreductase</keyword>
<keyword id="KW-0812">Transmembrane</keyword>
<keyword id="KW-1133">Transmembrane helix</keyword>
<name>TCMO_HELTU</name>
<evidence type="ECO:0000250" key="1">
    <source>
        <dbReference type="UniProtKB" id="Q94IP1"/>
    </source>
</evidence>
<evidence type="ECO:0000255" key="2"/>
<evidence type="ECO:0000269" key="3">
    <source>
    </source>
</evidence>
<evidence type="ECO:0000269" key="4">
    <source>
    </source>
</evidence>
<evidence type="ECO:0000269" key="5">
    <source>
    </source>
</evidence>
<evidence type="ECO:0000269" key="6">
    <source>
    </source>
</evidence>
<evidence type="ECO:0000269" key="7">
    <source>
    </source>
</evidence>
<evidence type="ECO:0000269" key="8">
    <source>
    </source>
</evidence>
<evidence type="ECO:0000269" key="9">
    <source>
    </source>
</evidence>
<evidence type="ECO:0000303" key="10">
    <source>
    </source>
</evidence>
<evidence type="ECO:0000303" key="11">
    <source>
    </source>
</evidence>
<evidence type="ECO:0000305" key="12"/>
<evidence type="ECO:0000305" key="13">
    <source>
    </source>
</evidence>
<comment type="function">
    <text evidence="6 7 8">Catalyzes the first oxidative step of the phenylpropanoid pathway in higher plants by transforming trans-cinnamate into p-coumarate (PubMed:14576280, PubMed:8026495, PubMed:9398253). The compounds formed by this pathway are essential components for lignification, pollination, and defense against ultraviolet light, predators and pathogens (PubMed:14576280, PubMed:8026495, PubMed:9398253). Can also use 2-naphthoic acid as substrate (PubMed:9398253).</text>
</comment>
<comment type="catalytic activity">
    <reaction evidence="7 8">
        <text>(E)-cinnamate + reduced [NADPH--hemoprotein reductase] + O2 = (E)-4-coumarate + oxidized [NADPH--hemoprotein reductase] + H2O + H(+)</text>
        <dbReference type="Rhea" id="RHEA:10608"/>
        <dbReference type="Rhea" id="RHEA-COMP:11964"/>
        <dbReference type="Rhea" id="RHEA-COMP:11965"/>
        <dbReference type="ChEBI" id="CHEBI:12876"/>
        <dbReference type="ChEBI" id="CHEBI:15377"/>
        <dbReference type="ChEBI" id="CHEBI:15378"/>
        <dbReference type="ChEBI" id="CHEBI:15379"/>
        <dbReference type="ChEBI" id="CHEBI:15669"/>
        <dbReference type="ChEBI" id="CHEBI:57618"/>
        <dbReference type="ChEBI" id="CHEBI:58210"/>
        <dbReference type="EC" id="1.14.14.91"/>
    </reaction>
    <physiologicalReaction direction="left-to-right" evidence="7 8">
        <dbReference type="Rhea" id="RHEA:10609"/>
    </physiologicalReaction>
</comment>
<comment type="cofactor">
    <cofactor evidence="1">
        <name>heme</name>
        <dbReference type="ChEBI" id="CHEBI:30413"/>
    </cofactor>
</comment>
<comment type="activity regulation">
    <text evidence="9">Inactivated by piperonylic acid.</text>
</comment>
<comment type="biophysicochemical properties">
    <kinetics>
        <KM evidence="8">2.2 uM for trans-cinnamate</KM>
        <KM evidence="8">2.7 uM for 2-naphthoic acid</KM>
    </kinetics>
</comment>
<comment type="pathway">
    <text evidence="12">Phenylpropanoid metabolism; trans-4-coumarate biosynthesis; trans-4-coumarate from trans-cinnamate: step 1/1.</text>
</comment>
<comment type="subcellular location">
    <subcellularLocation>
        <location evidence="2">Membrane</location>
        <topology evidence="2">Single-pass membrane protein</topology>
    </subcellularLocation>
</comment>
<comment type="induction">
    <text evidence="4 13">By light, wounding, infection, exposure to xenobiotics and fungal elicitor (Probable). Induced by magnesium chloride, aminopyrine, phenobarbital and clofibrate (at protein level) (PubMed:12223655).</text>
</comment>
<comment type="similarity">
    <text evidence="12">Belongs to the cytochrome P450 family.</text>
</comment>
<organism>
    <name type="scientific">Helianthus tuberosus</name>
    <name type="common">Jerusalem artichoke</name>
    <name type="synonym">Helianthus tomentosus</name>
    <dbReference type="NCBI Taxonomy" id="4233"/>
    <lineage>
        <taxon>Eukaryota</taxon>
        <taxon>Viridiplantae</taxon>
        <taxon>Streptophyta</taxon>
        <taxon>Embryophyta</taxon>
        <taxon>Tracheophyta</taxon>
        <taxon>Spermatophyta</taxon>
        <taxon>Magnoliopsida</taxon>
        <taxon>eudicotyledons</taxon>
        <taxon>Gunneridae</taxon>
        <taxon>Pentapetalae</taxon>
        <taxon>asterids</taxon>
        <taxon>campanulids</taxon>
        <taxon>Asterales</taxon>
        <taxon>Asteraceae</taxon>
        <taxon>Asteroideae</taxon>
        <taxon>Heliantheae alliance</taxon>
        <taxon>Heliantheae</taxon>
        <taxon>Helianthus</taxon>
    </lineage>
</organism>
<gene>
    <name evidence="10" type="primary">CYP73A1</name>
    <name evidence="11" type="synonym">CYP73</name>
</gene>
<protein>
    <recommendedName>
        <fullName>Trans-cinnamate 4-monooxygenase</fullName>
        <ecNumber evidence="7">1.14.14.91</ecNumber>
    </recommendedName>
    <alternativeName>
        <fullName>Cinnamic acid 4-hydroxylase</fullName>
        <shortName>C4H</shortName>
        <shortName>CA4H</shortName>
    </alternativeName>
    <alternativeName>
        <fullName>Cytochrome P450 73</fullName>
    </alternativeName>
    <alternativeName>
        <fullName>Cytochrome P450C4H</fullName>
    </alternativeName>
</protein>
<accession>Q04468</accession>
<feature type="chain" id="PRO_0000052246" description="Trans-cinnamate 4-monooxygenase">
    <location>
        <begin position="1"/>
        <end position="505"/>
    </location>
</feature>
<feature type="transmembrane region" description="Helical" evidence="2">
    <location>
        <begin position="3"/>
        <end position="23"/>
    </location>
</feature>
<feature type="binding site" evidence="1">
    <location>
        <begin position="213"/>
        <end position="218"/>
    </location>
    <ligand>
        <name>(E)-cinnamate</name>
        <dbReference type="ChEBI" id="CHEBI:15669"/>
    </ligand>
</feature>
<feature type="binding site" evidence="1">
    <location>
        <position position="306"/>
    </location>
    <ligand>
        <name>(E)-cinnamate</name>
        <dbReference type="ChEBI" id="CHEBI:15669"/>
    </ligand>
</feature>
<feature type="binding site" description="axial binding residue" evidence="1">
    <location>
        <position position="447"/>
    </location>
    <ligand>
        <name>heme</name>
        <dbReference type="ChEBI" id="CHEBI:30413"/>
    </ligand>
    <ligandPart>
        <name>Fe</name>
        <dbReference type="ChEBI" id="CHEBI:18248"/>
    </ligandPart>
</feature>
<feature type="mutagenesis site" description="Reduces catalytic activity 500-fold." evidence="5">
    <original>R</original>
    <variation>M</variation>
    <location>
        <position position="101"/>
    </location>
</feature>
<feature type="mutagenesis site" description="Reduces catalytic activity 3-fold and cinnamate binding affinity 8-fold." evidence="5">
    <original>R</original>
    <variation>E</variation>
    <location>
        <position position="103"/>
    </location>
</feature>
<feature type="mutagenesis site" description="Reduces catalytic activity 2-fold and cinnamate binding affinity 2.4-fold." evidence="5">
    <original>R</original>
    <variation>M</variation>
    <location>
        <position position="103"/>
    </location>
</feature>
<feature type="mutagenesis site" description="Reduces catalytic activity 10-fold and cinnamate binding affinity 6.3-fold." evidence="5">
    <original>N</original>
    <variation>D</variation>
    <location>
        <position position="302"/>
    </location>
</feature>
<feature type="mutagenesis site" description="Reduces catalytic activity 200-fold and cinnamate binding affinity 2-fold." evidence="5">
    <original>N</original>
    <variation>F</variation>
    <location>
        <position position="302"/>
    </location>
</feature>
<feature type="mutagenesis site" description="Reduces catalytic activity 1.3-fold and increases cinnamate binding affinity 1.8-fold." evidence="5">
    <original>I</original>
    <variation>A</variation>
    <location>
        <position position="303"/>
    </location>
</feature>
<feature type="mutagenesis site" description="Decreases cinnamate binding affinity and reduces catalytic efficiency 3-fold." evidence="3">
    <original>A</original>
    <variation>G</variation>
    <location>
        <position position="306"/>
    </location>
</feature>
<feature type="mutagenesis site" description="Reduces catalytic activity 1.7-fold and cinnamate binding affinity 1.5-fold." evidence="5">
    <original>R</original>
    <variation>K</variation>
    <location>
        <position position="366"/>
    </location>
</feature>
<feature type="mutagenesis site" description="Reduces catalytic activity 1000-fold and cinnamate binding affinity 15-fold." evidence="5">
    <original>R</original>
    <variation>M</variation>
    <location>
        <position position="366"/>
    </location>
</feature>
<feature type="mutagenesis site" description="Reduces catalytic activity 2-fold and cinnamate binding affinity 1.5-fold." evidence="5">
    <original>R</original>
    <variation>F</variation>
    <location>
        <position position="368"/>
    </location>
</feature>
<feature type="mutagenesis site" description="Reduces catalytic activity 9-fold and cinnamate binding affinity 3.5-fold.">
    <original>I</original>
    <variation>A</variation>
    <location>
        <position position="371"/>
    </location>
</feature>
<feature type="mutagenesis site" description="Reduces catalytic activity 1111-fold and cinnamate binding affinity 15-fold.">
    <original>I</original>
    <variation>F</variation>
    <location>
        <position position="371"/>
    </location>
</feature>
<feature type="mutagenesis site" description="Reduces catalytic activity 91-fold and cinnamate binding affinity 1.6-fold.">
    <original>I</original>
    <variation>K</variation>
    <location>
        <position position="371"/>
    </location>
</feature>
<feature type="mutagenesis site" description="Reduces dramatically catalytic activity." evidence="3">
    <original>P</original>
    <variation>F</variation>
    <variation>I</variation>
    <location>
        <position position="448"/>
    </location>
</feature>
<feature type="mutagenesis site" description="Reduces catalytic activity 2-fold and increases cinnamate binding affinity 1.2-fold." evidence="5">
    <original>K</original>
    <variation>M</variation>
    <location>
        <position position="484"/>
    </location>
</feature>
<proteinExistence type="evidence at protein level"/>